<accession>B7K0I0</accession>
<reference key="1">
    <citation type="journal article" date="2011" name="MBio">
        <title>Novel metabolic attributes of the genus Cyanothece, comprising a group of unicellular nitrogen-fixing Cyanobacteria.</title>
        <authorList>
            <person name="Bandyopadhyay A."/>
            <person name="Elvitigala T."/>
            <person name="Welsh E."/>
            <person name="Stockel J."/>
            <person name="Liberton M."/>
            <person name="Min H."/>
            <person name="Sherman L.A."/>
            <person name="Pakrasi H.B."/>
        </authorList>
    </citation>
    <scope>NUCLEOTIDE SEQUENCE [LARGE SCALE GENOMIC DNA]</scope>
    <source>
        <strain>PCC 8801 / RF-1</strain>
    </source>
</reference>
<name>PUR5_RIPO1</name>
<proteinExistence type="inferred from homology"/>
<evidence type="ECO:0000255" key="1">
    <source>
        <dbReference type="HAMAP-Rule" id="MF_00741"/>
    </source>
</evidence>
<comment type="catalytic activity">
    <reaction evidence="1">
        <text>2-formamido-N(1)-(5-O-phospho-beta-D-ribosyl)acetamidine + ATP = 5-amino-1-(5-phospho-beta-D-ribosyl)imidazole + ADP + phosphate + H(+)</text>
        <dbReference type="Rhea" id="RHEA:23032"/>
        <dbReference type="ChEBI" id="CHEBI:15378"/>
        <dbReference type="ChEBI" id="CHEBI:30616"/>
        <dbReference type="ChEBI" id="CHEBI:43474"/>
        <dbReference type="ChEBI" id="CHEBI:137981"/>
        <dbReference type="ChEBI" id="CHEBI:147287"/>
        <dbReference type="ChEBI" id="CHEBI:456216"/>
        <dbReference type="EC" id="6.3.3.1"/>
    </reaction>
</comment>
<comment type="pathway">
    <text evidence="1">Purine metabolism; IMP biosynthesis via de novo pathway; 5-amino-1-(5-phospho-D-ribosyl)imidazole from N(2)-formyl-N(1)-(5-phospho-D-ribosyl)glycinamide: step 2/2.</text>
</comment>
<comment type="subcellular location">
    <subcellularLocation>
        <location evidence="1">Cytoplasm</location>
    </subcellularLocation>
</comment>
<comment type="similarity">
    <text evidence="1">Belongs to the AIR synthase family.</text>
</comment>
<organism>
    <name type="scientific">Rippkaea orientalis (strain PCC 8801 / RF-1)</name>
    <name type="common">Cyanothece sp. (strain PCC 8801)</name>
    <dbReference type="NCBI Taxonomy" id="41431"/>
    <lineage>
        <taxon>Bacteria</taxon>
        <taxon>Bacillati</taxon>
        <taxon>Cyanobacteriota</taxon>
        <taxon>Cyanophyceae</taxon>
        <taxon>Oscillatoriophycideae</taxon>
        <taxon>Chroococcales</taxon>
        <taxon>Aphanothecaceae</taxon>
        <taxon>Rippkaea</taxon>
        <taxon>Rippkaea orientalis</taxon>
    </lineage>
</organism>
<feature type="chain" id="PRO_1000193012" description="Phosphoribosylformylglycinamidine cyclo-ligase">
    <location>
        <begin position="1"/>
        <end position="343"/>
    </location>
</feature>
<keyword id="KW-0067">ATP-binding</keyword>
<keyword id="KW-0963">Cytoplasm</keyword>
<keyword id="KW-0436">Ligase</keyword>
<keyword id="KW-0547">Nucleotide-binding</keyword>
<keyword id="KW-0658">Purine biosynthesis</keyword>
<keyword id="KW-1185">Reference proteome</keyword>
<sequence>MDYREAGVDIQAGRSFVEKIRQGVESTYRREVLGGLGGFGGYFELPQGYQHPVLVSGTDGVGTKLKIAQALNQHHTIGIDLVAMCVNDVLTCGAEPLFFLDYLATGKLNPQQLSDVVQGIVEGCRLSGCALLGGETAEMPGFYPVGEYDVAGFCVGIVEKSKILDGSQVNIGDIAIGLASSGVHSNGFSLVRKIVEVNGLNWSDRPQLLNGQTLGEVLLTPTQLYVKPILNALNSGLDIHAMAHITGGGLPENLPRCLDKGQSVEIIDKSWNILPIFQWIAQQGQISPASMYETFNMGIGFVVIVPPEKAQLAVNFLENQGILAYEIGKVIEGKGEVVIESND</sequence>
<gene>
    <name evidence="1" type="primary">purM</name>
    <name type="ordered locus">PCC8801_3499</name>
</gene>
<protein>
    <recommendedName>
        <fullName evidence="1">Phosphoribosylformylglycinamidine cyclo-ligase</fullName>
        <ecNumber evidence="1">6.3.3.1</ecNumber>
    </recommendedName>
    <alternativeName>
        <fullName evidence="1">AIR synthase</fullName>
    </alternativeName>
    <alternativeName>
        <fullName evidence="1">AIRS</fullName>
    </alternativeName>
    <alternativeName>
        <fullName evidence="1">Phosphoribosyl-aminoimidazole synthetase</fullName>
    </alternativeName>
</protein>
<dbReference type="EC" id="6.3.3.1" evidence="1"/>
<dbReference type="EMBL" id="CP001287">
    <property type="protein sequence ID" value="ACK67464.1"/>
    <property type="molecule type" value="Genomic_DNA"/>
</dbReference>
<dbReference type="RefSeq" id="WP_012596723.1">
    <property type="nucleotide sequence ID" value="NC_011726.1"/>
</dbReference>
<dbReference type="SMR" id="B7K0I0"/>
<dbReference type="STRING" id="41431.PCC8801_3499"/>
<dbReference type="KEGG" id="cyp:PCC8801_3499"/>
<dbReference type="eggNOG" id="COG0150">
    <property type="taxonomic scope" value="Bacteria"/>
</dbReference>
<dbReference type="HOGENOM" id="CLU_047116_0_0_3"/>
<dbReference type="OrthoDB" id="9802507at2"/>
<dbReference type="UniPathway" id="UPA00074">
    <property type="reaction ID" value="UER00129"/>
</dbReference>
<dbReference type="Proteomes" id="UP000008204">
    <property type="component" value="Chromosome"/>
</dbReference>
<dbReference type="GO" id="GO:0005829">
    <property type="term" value="C:cytosol"/>
    <property type="evidence" value="ECO:0007669"/>
    <property type="project" value="TreeGrafter"/>
</dbReference>
<dbReference type="GO" id="GO:0005524">
    <property type="term" value="F:ATP binding"/>
    <property type="evidence" value="ECO:0007669"/>
    <property type="project" value="UniProtKB-KW"/>
</dbReference>
<dbReference type="GO" id="GO:0004637">
    <property type="term" value="F:phosphoribosylamine-glycine ligase activity"/>
    <property type="evidence" value="ECO:0007669"/>
    <property type="project" value="TreeGrafter"/>
</dbReference>
<dbReference type="GO" id="GO:0004641">
    <property type="term" value="F:phosphoribosylformylglycinamidine cyclo-ligase activity"/>
    <property type="evidence" value="ECO:0007669"/>
    <property type="project" value="UniProtKB-UniRule"/>
</dbReference>
<dbReference type="GO" id="GO:0006189">
    <property type="term" value="P:'de novo' IMP biosynthetic process"/>
    <property type="evidence" value="ECO:0007669"/>
    <property type="project" value="UniProtKB-UniRule"/>
</dbReference>
<dbReference type="GO" id="GO:0046084">
    <property type="term" value="P:adenine biosynthetic process"/>
    <property type="evidence" value="ECO:0007669"/>
    <property type="project" value="TreeGrafter"/>
</dbReference>
<dbReference type="CDD" id="cd02196">
    <property type="entry name" value="PurM"/>
    <property type="match status" value="1"/>
</dbReference>
<dbReference type="FunFam" id="3.30.1330.10:FF:000001">
    <property type="entry name" value="Phosphoribosylformylglycinamidine cyclo-ligase"/>
    <property type="match status" value="1"/>
</dbReference>
<dbReference type="FunFam" id="3.90.650.10:FF:000011">
    <property type="entry name" value="Phosphoribosylformylglycinamidine cyclo-ligase"/>
    <property type="match status" value="1"/>
</dbReference>
<dbReference type="Gene3D" id="3.90.650.10">
    <property type="entry name" value="PurM-like C-terminal domain"/>
    <property type="match status" value="1"/>
</dbReference>
<dbReference type="Gene3D" id="3.30.1330.10">
    <property type="entry name" value="PurM-like, N-terminal domain"/>
    <property type="match status" value="1"/>
</dbReference>
<dbReference type="HAMAP" id="MF_00741">
    <property type="entry name" value="AIRS"/>
    <property type="match status" value="1"/>
</dbReference>
<dbReference type="InterPro" id="IPR010918">
    <property type="entry name" value="PurM-like_C_dom"/>
</dbReference>
<dbReference type="InterPro" id="IPR036676">
    <property type="entry name" value="PurM-like_C_sf"/>
</dbReference>
<dbReference type="InterPro" id="IPR016188">
    <property type="entry name" value="PurM-like_N"/>
</dbReference>
<dbReference type="InterPro" id="IPR036921">
    <property type="entry name" value="PurM-like_N_sf"/>
</dbReference>
<dbReference type="InterPro" id="IPR004733">
    <property type="entry name" value="PurM_cligase"/>
</dbReference>
<dbReference type="NCBIfam" id="TIGR00878">
    <property type="entry name" value="purM"/>
    <property type="match status" value="1"/>
</dbReference>
<dbReference type="PANTHER" id="PTHR10520:SF12">
    <property type="entry name" value="TRIFUNCTIONAL PURINE BIOSYNTHETIC PROTEIN ADENOSINE-3"/>
    <property type="match status" value="1"/>
</dbReference>
<dbReference type="PANTHER" id="PTHR10520">
    <property type="entry name" value="TRIFUNCTIONAL PURINE BIOSYNTHETIC PROTEIN ADENOSINE-3-RELATED"/>
    <property type="match status" value="1"/>
</dbReference>
<dbReference type="Pfam" id="PF00586">
    <property type="entry name" value="AIRS"/>
    <property type="match status" value="1"/>
</dbReference>
<dbReference type="Pfam" id="PF02769">
    <property type="entry name" value="AIRS_C"/>
    <property type="match status" value="1"/>
</dbReference>
<dbReference type="SUPFAM" id="SSF56042">
    <property type="entry name" value="PurM C-terminal domain-like"/>
    <property type="match status" value="1"/>
</dbReference>
<dbReference type="SUPFAM" id="SSF55326">
    <property type="entry name" value="PurM N-terminal domain-like"/>
    <property type="match status" value="1"/>
</dbReference>